<sequence length="643" mass="69240">MSRPSTPLLDKAPTPDRLRALPEQDLPQLAEELRTELIDAVSTTGGHLGAGLGVVELTVALHHVFNTPYDRIIWDVGHQAYPHKILTGRRDRIRTLRQAGGLSGFTKRAESEYDPFGAAHSSTSISAGLGMAVASELSGEKRNVIAVIGDGSMSAGMAYEAMNNAGALDARLIVILNDNDMSIAPPTGAMSAYLARLVSGRTYRSVREAAKQVAQKLPKFLQDKARKSEEYARAFFTGGTLFEELGFYYVGPIDGHNLDHLLPVLKNVRDTQKGPVLIHVVTQKGKGYAPAEAAADKYHGVNKFDVITGKQAKPPANAPSYTKIFGTSLIEEARHDDKIVAVTAAMPTGTGLDLFGEAFPKRVFDVGIAEQHAVTFAAGLASEGYKPFCAIYSTFLQRGYDQVVHDVSIQNLPVRFPIDRAGLVGADGPTHAGSFDTGFLAALPGFVVMAASDEAELRHMVRTAAEYDEGPISFRYPRGDGVGVDLPERGSVLEIGKGRIVREGTKVALLSFGTRLQECLAAAEELGAAGLSTTVADARFAKPLDHDLIRRLVREHEVLVMVEEGAVGGFSSHVLQFLATDGLLDRGLKVRALMLPDIYQDHGKPDAMYAEAGLDRTGIVRTVFAALHRDELGHEALPTPFRA</sequence>
<comment type="function">
    <text evidence="1">Catalyzes the acyloin condensation reaction between C atoms 2 and 3 of pyruvate and glyceraldehyde 3-phosphate to yield 1-deoxy-D-xylulose-5-phosphate (DXP).</text>
</comment>
<comment type="catalytic activity">
    <reaction evidence="1">
        <text>D-glyceraldehyde 3-phosphate + pyruvate + H(+) = 1-deoxy-D-xylulose 5-phosphate + CO2</text>
        <dbReference type="Rhea" id="RHEA:12605"/>
        <dbReference type="ChEBI" id="CHEBI:15361"/>
        <dbReference type="ChEBI" id="CHEBI:15378"/>
        <dbReference type="ChEBI" id="CHEBI:16526"/>
        <dbReference type="ChEBI" id="CHEBI:57792"/>
        <dbReference type="ChEBI" id="CHEBI:59776"/>
        <dbReference type="EC" id="2.2.1.7"/>
    </reaction>
</comment>
<comment type="cofactor">
    <cofactor evidence="1">
        <name>Mg(2+)</name>
        <dbReference type="ChEBI" id="CHEBI:18420"/>
    </cofactor>
    <text evidence="1">Binds 1 Mg(2+) ion per subunit.</text>
</comment>
<comment type="cofactor">
    <cofactor evidence="1">
        <name>thiamine diphosphate</name>
        <dbReference type="ChEBI" id="CHEBI:58937"/>
    </cofactor>
    <text evidence="1">Binds 1 thiamine pyrophosphate per subunit.</text>
</comment>
<comment type="pathway">
    <text evidence="1">Metabolic intermediate biosynthesis; 1-deoxy-D-xylulose 5-phosphate biosynthesis; 1-deoxy-D-xylulose 5-phosphate from D-glyceraldehyde 3-phosphate and pyruvate: step 1/1.</text>
</comment>
<comment type="subunit">
    <text evidence="1">Homodimer.</text>
</comment>
<comment type="similarity">
    <text evidence="1">Belongs to the transketolase family. DXPS subfamily.</text>
</comment>
<evidence type="ECO:0000255" key="1">
    <source>
        <dbReference type="HAMAP-Rule" id="MF_00315"/>
    </source>
</evidence>
<proteinExistence type="inferred from homology"/>
<accession>Q2YMF0</accession>
<dbReference type="EC" id="2.2.1.7" evidence="1"/>
<dbReference type="EMBL" id="AM040264">
    <property type="protein sequence ID" value="CAJ10418.1"/>
    <property type="molecule type" value="Genomic_DNA"/>
</dbReference>
<dbReference type="RefSeq" id="WP_002969803.1">
    <property type="nucleotide sequence ID" value="NZ_KN046823.1"/>
</dbReference>
<dbReference type="SMR" id="Q2YMF0"/>
<dbReference type="STRING" id="359391.BAB1_0462"/>
<dbReference type="GeneID" id="93017117"/>
<dbReference type="KEGG" id="bmf:BAB1_0462"/>
<dbReference type="PATRIC" id="fig|359391.11.peg.2502"/>
<dbReference type="HOGENOM" id="CLU_009227_1_4_5"/>
<dbReference type="PhylomeDB" id="Q2YMF0"/>
<dbReference type="UniPathway" id="UPA00064">
    <property type="reaction ID" value="UER00091"/>
</dbReference>
<dbReference type="Proteomes" id="UP000002719">
    <property type="component" value="Chromosome I"/>
</dbReference>
<dbReference type="GO" id="GO:0008661">
    <property type="term" value="F:1-deoxy-D-xylulose-5-phosphate synthase activity"/>
    <property type="evidence" value="ECO:0007669"/>
    <property type="project" value="UniProtKB-UniRule"/>
</dbReference>
<dbReference type="GO" id="GO:0000287">
    <property type="term" value="F:magnesium ion binding"/>
    <property type="evidence" value="ECO:0007669"/>
    <property type="project" value="UniProtKB-UniRule"/>
</dbReference>
<dbReference type="GO" id="GO:0030976">
    <property type="term" value="F:thiamine pyrophosphate binding"/>
    <property type="evidence" value="ECO:0007669"/>
    <property type="project" value="UniProtKB-UniRule"/>
</dbReference>
<dbReference type="GO" id="GO:0052865">
    <property type="term" value="P:1-deoxy-D-xylulose 5-phosphate biosynthetic process"/>
    <property type="evidence" value="ECO:0007669"/>
    <property type="project" value="UniProtKB-UniPathway"/>
</dbReference>
<dbReference type="GO" id="GO:0019682">
    <property type="term" value="P:glyceraldehyde-3-phosphate metabolic process"/>
    <property type="evidence" value="ECO:0007669"/>
    <property type="project" value="UniProtKB-ARBA"/>
</dbReference>
<dbReference type="GO" id="GO:0016114">
    <property type="term" value="P:terpenoid biosynthetic process"/>
    <property type="evidence" value="ECO:0007669"/>
    <property type="project" value="UniProtKB-UniRule"/>
</dbReference>
<dbReference type="GO" id="GO:0009228">
    <property type="term" value="P:thiamine biosynthetic process"/>
    <property type="evidence" value="ECO:0007669"/>
    <property type="project" value="UniProtKB-UniRule"/>
</dbReference>
<dbReference type="CDD" id="cd02007">
    <property type="entry name" value="TPP_DXS"/>
    <property type="match status" value="1"/>
</dbReference>
<dbReference type="CDD" id="cd07033">
    <property type="entry name" value="TPP_PYR_DXS_TK_like"/>
    <property type="match status" value="1"/>
</dbReference>
<dbReference type="FunFam" id="3.40.50.920:FF:000002">
    <property type="entry name" value="1-deoxy-D-xylulose-5-phosphate synthase"/>
    <property type="match status" value="1"/>
</dbReference>
<dbReference type="FunFam" id="3.40.50.970:FF:000005">
    <property type="entry name" value="1-deoxy-D-xylulose-5-phosphate synthase"/>
    <property type="match status" value="1"/>
</dbReference>
<dbReference type="Gene3D" id="3.40.50.920">
    <property type="match status" value="1"/>
</dbReference>
<dbReference type="Gene3D" id="3.40.50.970">
    <property type="match status" value="2"/>
</dbReference>
<dbReference type="HAMAP" id="MF_00315">
    <property type="entry name" value="DXP_synth"/>
    <property type="match status" value="1"/>
</dbReference>
<dbReference type="InterPro" id="IPR005477">
    <property type="entry name" value="Dxylulose-5-P_synthase"/>
</dbReference>
<dbReference type="InterPro" id="IPR029061">
    <property type="entry name" value="THDP-binding"/>
</dbReference>
<dbReference type="InterPro" id="IPR009014">
    <property type="entry name" value="Transketo_C/PFOR_II"/>
</dbReference>
<dbReference type="InterPro" id="IPR005475">
    <property type="entry name" value="Transketolase-like_Pyr-bd"/>
</dbReference>
<dbReference type="InterPro" id="IPR020826">
    <property type="entry name" value="Transketolase_BS"/>
</dbReference>
<dbReference type="InterPro" id="IPR033248">
    <property type="entry name" value="Transketolase_C"/>
</dbReference>
<dbReference type="InterPro" id="IPR049557">
    <property type="entry name" value="Transketolase_CS"/>
</dbReference>
<dbReference type="NCBIfam" id="TIGR00204">
    <property type="entry name" value="dxs"/>
    <property type="match status" value="1"/>
</dbReference>
<dbReference type="NCBIfam" id="NF003933">
    <property type="entry name" value="PRK05444.2-2"/>
    <property type="match status" value="1"/>
</dbReference>
<dbReference type="PANTHER" id="PTHR43322">
    <property type="entry name" value="1-D-DEOXYXYLULOSE 5-PHOSPHATE SYNTHASE-RELATED"/>
    <property type="match status" value="1"/>
</dbReference>
<dbReference type="PANTHER" id="PTHR43322:SF5">
    <property type="entry name" value="1-DEOXY-D-XYLULOSE-5-PHOSPHATE SYNTHASE, CHLOROPLASTIC"/>
    <property type="match status" value="1"/>
</dbReference>
<dbReference type="Pfam" id="PF13292">
    <property type="entry name" value="DXP_synthase_N"/>
    <property type="match status" value="1"/>
</dbReference>
<dbReference type="Pfam" id="PF02779">
    <property type="entry name" value="Transket_pyr"/>
    <property type="match status" value="1"/>
</dbReference>
<dbReference type="Pfam" id="PF02780">
    <property type="entry name" value="Transketolase_C"/>
    <property type="match status" value="1"/>
</dbReference>
<dbReference type="SMART" id="SM00861">
    <property type="entry name" value="Transket_pyr"/>
    <property type="match status" value="1"/>
</dbReference>
<dbReference type="SUPFAM" id="SSF52518">
    <property type="entry name" value="Thiamin diphosphate-binding fold (THDP-binding)"/>
    <property type="match status" value="2"/>
</dbReference>
<dbReference type="SUPFAM" id="SSF52922">
    <property type="entry name" value="TK C-terminal domain-like"/>
    <property type="match status" value="1"/>
</dbReference>
<dbReference type="PROSITE" id="PS00801">
    <property type="entry name" value="TRANSKETOLASE_1"/>
    <property type="match status" value="1"/>
</dbReference>
<dbReference type="PROSITE" id="PS00802">
    <property type="entry name" value="TRANSKETOLASE_2"/>
    <property type="match status" value="1"/>
</dbReference>
<organism>
    <name type="scientific">Brucella abortus (strain 2308)</name>
    <dbReference type="NCBI Taxonomy" id="359391"/>
    <lineage>
        <taxon>Bacteria</taxon>
        <taxon>Pseudomonadati</taxon>
        <taxon>Pseudomonadota</taxon>
        <taxon>Alphaproteobacteria</taxon>
        <taxon>Hyphomicrobiales</taxon>
        <taxon>Brucellaceae</taxon>
        <taxon>Brucella/Ochrobactrum group</taxon>
        <taxon>Brucella</taxon>
    </lineage>
</organism>
<name>DXS_BRUA2</name>
<reference key="1">
    <citation type="journal article" date="2005" name="Infect. Immun.">
        <title>Whole-genome analyses of speciation events in pathogenic Brucellae.</title>
        <authorList>
            <person name="Chain P.S."/>
            <person name="Comerci D.J."/>
            <person name="Tolmasky M.E."/>
            <person name="Larimer F.W."/>
            <person name="Malfatti S.A."/>
            <person name="Vergez L.M."/>
            <person name="Aguero F."/>
            <person name="Land M.L."/>
            <person name="Ugalde R.A."/>
            <person name="Garcia E."/>
        </authorList>
    </citation>
    <scope>NUCLEOTIDE SEQUENCE [LARGE SCALE GENOMIC DNA]</scope>
    <source>
        <strain>2308</strain>
    </source>
</reference>
<protein>
    <recommendedName>
        <fullName evidence="1">1-deoxy-D-xylulose-5-phosphate synthase</fullName>
        <ecNumber evidence="1">2.2.1.7</ecNumber>
    </recommendedName>
    <alternativeName>
        <fullName evidence="1">1-deoxyxylulose-5-phosphate synthase</fullName>
        <shortName evidence="1">DXP synthase</shortName>
        <shortName evidence="1">DXPS</shortName>
    </alternativeName>
</protein>
<gene>
    <name evidence="1" type="primary">dxs</name>
    <name type="ordered locus">BAB1_0462</name>
</gene>
<keyword id="KW-0414">Isoprene biosynthesis</keyword>
<keyword id="KW-0460">Magnesium</keyword>
<keyword id="KW-0479">Metal-binding</keyword>
<keyword id="KW-1185">Reference proteome</keyword>
<keyword id="KW-0784">Thiamine biosynthesis</keyword>
<keyword id="KW-0786">Thiamine pyrophosphate</keyword>
<keyword id="KW-0808">Transferase</keyword>
<feature type="chain" id="PRO_0000256385" description="1-deoxy-D-xylulose-5-phosphate synthase">
    <location>
        <begin position="1"/>
        <end position="643"/>
    </location>
</feature>
<feature type="binding site" evidence="1">
    <location>
        <position position="78"/>
    </location>
    <ligand>
        <name>thiamine diphosphate</name>
        <dbReference type="ChEBI" id="CHEBI:58937"/>
    </ligand>
</feature>
<feature type="binding site" evidence="1">
    <location>
        <begin position="119"/>
        <end position="121"/>
    </location>
    <ligand>
        <name>thiamine diphosphate</name>
        <dbReference type="ChEBI" id="CHEBI:58937"/>
    </ligand>
</feature>
<feature type="binding site" evidence="1">
    <location>
        <position position="150"/>
    </location>
    <ligand>
        <name>Mg(2+)</name>
        <dbReference type="ChEBI" id="CHEBI:18420"/>
    </ligand>
</feature>
<feature type="binding site" evidence="1">
    <location>
        <begin position="151"/>
        <end position="152"/>
    </location>
    <ligand>
        <name>thiamine diphosphate</name>
        <dbReference type="ChEBI" id="CHEBI:58937"/>
    </ligand>
</feature>
<feature type="binding site" evidence="1">
    <location>
        <position position="179"/>
    </location>
    <ligand>
        <name>Mg(2+)</name>
        <dbReference type="ChEBI" id="CHEBI:18420"/>
    </ligand>
</feature>
<feature type="binding site" evidence="1">
    <location>
        <position position="179"/>
    </location>
    <ligand>
        <name>thiamine diphosphate</name>
        <dbReference type="ChEBI" id="CHEBI:58937"/>
    </ligand>
</feature>
<feature type="binding site" evidence="1">
    <location>
        <position position="288"/>
    </location>
    <ligand>
        <name>thiamine diphosphate</name>
        <dbReference type="ChEBI" id="CHEBI:58937"/>
    </ligand>
</feature>
<feature type="binding site" evidence="1">
    <location>
        <position position="370"/>
    </location>
    <ligand>
        <name>thiamine diphosphate</name>
        <dbReference type="ChEBI" id="CHEBI:58937"/>
    </ligand>
</feature>